<protein>
    <recommendedName>
        <fullName evidence="1">Large ribosomal subunit protein uL14c</fullName>
    </recommendedName>
    <alternativeName>
        <fullName evidence="2">50S ribosomal protein L14, chloroplastic</fullName>
    </alternativeName>
</protein>
<feature type="chain" id="PRO_0000276334" description="Large ribosomal subunit protein uL14c">
    <location>
        <begin position="1"/>
        <end position="123"/>
    </location>
</feature>
<name>RK14_AGRST</name>
<proteinExistence type="inferred from homology"/>
<reference key="1">
    <citation type="journal article" date="2007" name="Theor. Appl. Genet.">
        <title>Complete chloroplast genome sequences of Hordeum vulgare, Sorghum bicolor and Agrostis stolonifera, and comparative analyses with other grass genomes.</title>
        <authorList>
            <person name="Saski C."/>
            <person name="Lee S.-B."/>
            <person name="Fjellheim S."/>
            <person name="Guda C."/>
            <person name="Jansen R.K."/>
            <person name="Luo H."/>
            <person name="Tomkins J."/>
            <person name="Rognli O.A."/>
            <person name="Daniell H."/>
            <person name="Clarke J.L."/>
        </authorList>
    </citation>
    <scope>NUCLEOTIDE SEQUENCE [LARGE SCALE GENOMIC DNA]</scope>
    <source>
        <strain>cv. Penn A-4</strain>
    </source>
</reference>
<geneLocation type="chloroplast"/>
<gene>
    <name evidence="1" type="primary">rpl14</name>
</gene>
<keyword id="KW-0150">Chloroplast</keyword>
<keyword id="KW-0934">Plastid</keyword>
<keyword id="KW-0687">Ribonucleoprotein</keyword>
<keyword id="KW-0689">Ribosomal protein</keyword>
<keyword id="KW-0694">RNA-binding</keyword>
<keyword id="KW-0699">rRNA-binding</keyword>
<dbReference type="EMBL" id="EF115543">
    <property type="protein sequence ID" value="ABK79616.1"/>
    <property type="molecule type" value="Genomic_DNA"/>
</dbReference>
<dbReference type="RefSeq" id="YP_874773.1">
    <property type="nucleotide sequence ID" value="NC_008591.1"/>
</dbReference>
<dbReference type="SMR" id="A1EA45"/>
<dbReference type="GeneID" id="4524946"/>
<dbReference type="GO" id="GO:0009507">
    <property type="term" value="C:chloroplast"/>
    <property type="evidence" value="ECO:0007669"/>
    <property type="project" value="UniProtKB-SubCell"/>
</dbReference>
<dbReference type="GO" id="GO:0022625">
    <property type="term" value="C:cytosolic large ribosomal subunit"/>
    <property type="evidence" value="ECO:0007669"/>
    <property type="project" value="TreeGrafter"/>
</dbReference>
<dbReference type="GO" id="GO:0070180">
    <property type="term" value="F:large ribosomal subunit rRNA binding"/>
    <property type="evidence" value="ECO:0007669"/>
    <property type="project" value="TreeGrafter"/>
</dbReference>
<dbReference type="GO" id="GO:0003735">
    <property type="term" value="F:structural constituent of ribosome"/>
    <property type="evidence" value="ECO:0007669"/>
    <property type="project" value="InterPro"/>
</dbReference>
<dbReference type="GO" id="GO:0006412">
    <property type="term" value="P:translation"/>
    <property type="evidence" value="ECO:0007669"/>
    <property type="project" value="UniProtKB-UniRule"/>
</dbReference>
<dbReference type="CDD" id="cd00337">
    <property type="entry name" value="Ribosomal_uL14"/>
    <property type="match status" value="1"/>
</dbReference>
<dbReference type="FunFam" id="2.40.150.20:FF:000002">
    <property type="entry name" value="50S ribosomal protein L14, chloroplastic"/>
    <property type="match status" value="1"/>
</dbReference>
<dbReference type="Gene3D" id="2.40.150.20">
    <property type="entry name" value="Ribosomal protein L14"/>
    <property type="match status" value="1"/>
</dbReference>
<dbReference type="HAMAP" id="MF_01367">
    <property type="entry name" value="Ribosomal_uL14"/>
    <property type="match status" value="1"/>
</dbReference>
<dbReference type="InterPro" id="IPR000218">
    <property type="entry name" value="Ribosomal_uL14"/>
</dbReference>
<dbReference type="InterPro" id="IPR005745">
    <property type="entry name" value="Ribosomal_uL14_bac-type"/>
</dbReference>
<dbReference type="InterPro" id="IPR019972">
    <property type="entry name" value="Ribosomal_uL14_CS"/>
</dbReference>
<dbReference type="InterPro" id="IPR036853">
    <property type="entry name" value="Ribosomal_uL14_sf"/>
</dbReference>
<dbReference type="NCBIfam" id="TIGR01067">
    <property type="entry name" value="rplN_bact"/>
    <property type="match status" value="1"/>
</dbReference>
<dbReference type="PANTHER" id="PTHR11761">
    <property type="entry name" value="50S/60S RIBOSOMAL PROTEIN L14/L23"/>
    <property type="match status" value="1"/>
</dbReference>
<dbReference type="PANTHER" id="PTHR11761:SF3">
    <property type="entry name" value="LARGE RIBOSOMAL SUBUNIT PROTEIN UL14M"/>
    <property type="match status" value="1"/>
</dbReference>
<dbReference type="Pfam" id="PF00238">
    <property type="entry name" value="Ribosomal_L14"/>
    <property type="match status" value="1"/>
</dbReference>
<dbReference type="SMART" id="SM01374">
    <property type="entry name" value="Ribosomal_L14"/>
    <property type="match status" value="1"/>
</dbReference>
<dbReference type="SUPFAM" id="SSF50193">
    <property type="entry name" value="Ribosomal protein L14"/>
    <property type="match status" value="1"/>
</dbReference>
<dbReference type="PROSITE" id="PS00049">
    <property type="entry name" value="RIBOSOMAL_L14"/>
    <property type="match status" value="1"/>
</dbReference>
<sequence>MIQPQTLLNVADNSGARKLMCIRVIGAAGNQRYARIGDVIVAVIKDALPQMPLERSEVIRAVIVRTCKEFKCEDGIIIRYDDNAAVIIDQKGNPKGTRVFGAIAEELRELNFTKIVSLAPEVL</sequence>
<organism>
    <name type="scientific">Agrostis stolonifera</name>
    <name type="common">Creeping bentgrass</name>
    <dbReference type="NCBI Taxonomy" id="63632"/>
    <lineage>
        <taxon>Eukaryota</taxon>
        <taxon>Viridiplantae</taxon>
        <taxon>Streptophyta</taxon>
        <taxon>Embryophyta</taxon>
        <taxon>Tracheophyta</taxon>
        <taxon>Spermatophyta</taxon>
        <taxon>Magnoliopsida</taxon>
        <taxon>Liliopsida</taxon>
        <taxon>Poales</taxon>
        <taxon>Poaceae</taxon>
        <taxon>BOP clade</taxon>
        <taxon>Pooideae</taxon>
        <taxon>Poodae</taxon>
        <taxon>Poeae</taxon>
        <taxon>Poeae Chloroplast Group 1 (Aveneae type)</taxon>
        <taxon>Agrostidodinae</taxon>
        <taxon>Agrostidinae</taxon>
        <taxon>Agrostis</taxon>
    </lineage>
</organism>
<evidence type="ECO:0000255" key="1">
    <source>
        <dbReference type="HAMAP-Rule" id="MF_01367"/>
    </source>
</evidence>
<evidence type="ECO:0000305" key="2"/>
<accession>A1EA45</accession>
<comment type="function">
    <text evidence="1">Binds to 23S rRNA.</text>
</comment>
<comment type="subunit">
    <text evidence="1">Part of the 50S ribosomal subunit.</text>
</comment>
<comment type="subcellular location">
    <subcellularLocation>
        <location>Plastid</location>
        <location>Chloroplast</location>
    </subcellularLocation>
</comment>
<comment type="similarity">
    <text evidence="1">Belongs to the universal ribosomal protein uL14 family.</text>
</comment>